<protein>
    <recommendedName>
        <fullName evidence="1">Small ribosomal subunit protein uS10</fullName>
    </recommendedName>
    <alternativeName>
        <fullName evidence="2">30S ribosomal protein S10</fullName>
    </alternativeName>
</protein>
<proteinExistence type="inferred from homology"/>
<gene>
    <name evidence="1" type="primary">rpsJ</name>
    <name type="ordered locus">Rleg2_1331</name>
</gene>
<keyword id="KW-1185">Reference proteome</keyword>
<keyword id="KW-0687">Ribonucleoprotein</keyword>
<keyword id="KW-0689">Ribosomal protein</keyword>
<organism>
    <name type="scientific">Rhizobium leguminosarum bv. trifolii (strain WSM2304)</name>
    <dbReference type="NCBI Taxonomy" id="395492"/>
    <lineage>
        <taxon>Bacteria</taxon>
        <taxon>Pseudomonadati</taxon>
        <taxon>Pseudomonadota</taxon>
        <taxon>Alphaproteobacteria</taxon>
        <taxon>Hyphomicrobiales</taxon>
        <taxon>Rhizobiaceae</taxon>
        <taxon>Rhizobium/Agrobacterium group</taxon>
        <taxon>Rhizobium</taxon>
    </lineage>
</organism>
<feature type="chain" id="PRO_1000127172" description="Small ribosomal subunit protein uS10">
    <location>
        <begin position="1"/>
        <end position="102"/>
    </location>
</feature>
<comment type="function">
    <text evidence="1">Involved in the binding of tRNA to the ribosomes.</text>
</comment>
<comment type="subunit">
    <text evidence="1">Part of the 30S ribosomal subunit.</text>
</comment>
<comment type="similarity">
    <text evidence="1">Belongs to the universal ribosomal protein uS10 family.</text>
</comment>
<dbReference type="EMBL" id="CP001191">
    <property type="protein sequence ID" value="ACI54625.1"/>
    <property type="molecule type" value="Genomic_DNA"/>
</dbReference>
<dbReference type="RefSeq" id="WP_003547547.1">
    <property type="nucleotide sequence ID" value="NC_011369.1"/>
</dbReference>
<dbReference type="SMR" id="B5ZYT4"/>
<dbReference type="STRING" id="395492.Rleg2_1331"/>
<dbReference type="GeneID" id="91148127"/>
<dbReference type="KEGG" id="rlt:Rleg2_1331"/>
<dbReference type="eggNOG" id="COG0051">
    <property type="taxonomic scope" value="Bacteria"/>
</dbReference>
<dbReference type="HOGENOM" id="CLU_122625_1_3_5"/>
<dbReference type="Proteomes" id="UP000008330">
    <property type="component" value="Chromosome"/>
</dbReference>
<dbReference type="GO" id="GO:1990904">
    <property type="term" value="C:ribonucleoprotein complex"/>
    <property type="evidence" value="ECO:0007669"/>
    <property type="project" value="UniProtKB-KW"/>
</dbReference>
<dbReference type="GO" id="GO:0005840">
    <property type="term" value="C:ribosome"/>
    <property type="evidence" value="ECO:0007669"/>
    <property type="project" value="UniProtKB-KW"/>
</dbReference>
<dbReference type="GO" id="GO:0003735">
    <property type="term" value="F:structural constituent of ribosome"/>
    <property type="evidence" value="ECO:0007669"/>
    <property type="project" value="InterPro"/>
</dbReference>
<dbReference type="GO" id="GO:0000049">
    <property type="term" value="F:tRNA binding"/>
    <property type="evidence" value="ECO:0007669"/>
    <property type="project" value="UniProtKB-UniRule"/>
</dbReference>
<dbReference type="GO" id="GO:0006412">
    <property type="term" value="P:translation"/>
    <property type="evidence" value="ECO:0007669"/>
    <property type="project" value="UniProtKB-UniRule"/>
</dbReference>
<dbReference type="FunFam" id="3.30.70.600:FF:000001">
    <property type="entry name" value="30S ribosomal protein S10"/>
    <property type="match status" value="1"/>
</dbReference>
<dbReference type="Gene3D" id="3.30.70.600">
    <property type="entry name" value="Ribosomal protein S10 domain"/>
    <property type="match status" value="1"/>
</dbReference>
<dbReference type="HAMAP" id="MF_00508">
    <property type="entry name" value="Ribosomal_uS10"/>
    <property type="match status" value="1"/>
</dbReference>
<dbReference type="InterPro" id="IPR001848">
    <property type="entry name" value="Ribosomal_uS10"/>
</dbReference>
<dbReference type="InterPro" id="IPR018268">
    <property type="entry name" value="Ribosomal_uS10_CS"/>
</dbReference>
<dbReference type="InterPro" id="IPR027486">
    <property type="entry name" value="Ribosomal_uS10_dom"/>
</dbReference>
<dbReference type="InterPro" id="IPR036838">
    <property type="entry name" value="Ribosomal_uS10_dom_sf"/>
</dbReference>
<dbReference type="NCBIfam" id="NF001861">
    <property type="entry name" value="PRK00596.1"/>
    <property type="match status" value="1"/>
</dbReference>
<dbReference type="NCBIfam" id="TIGR01049">
    <property type="entry name" value="rpsJ_bact"/>
    <property type="match status" value="1"/>
</dbReference>
<dbReference type="PANTHER" id="PTHR11700">
    <property type="entry name" value="30S RIBOSOMAL PROTEIN S10 FAMILY MEMBER"/>
    <property type="match status" value="1"/>
</dbReference>
<dbReference type="Pfam" id="PF00338">
    <property type="entry name" value="Ribosomal_S10"/>
    <property type="match status" value="1"/>
</dbReference>
<dbReference type="PRINTS" id="PR00971">
    <property type="entry name" value="RIBOSOMALS10"/>
</dbReference>
<dbReference type="SMART" id="SM01403">
    <property type="entry name" value="Ribosomal_S10"/>
    <property type="match status" value="1"/>
</dbReference>
<dbReference type="SUPFAM" id="SSF54999">
    <property type="entry name" value="Ribosomal protein S10"/>
    <property type="match status" value="1"/>
</dbReference>
<dbReference type="PROSITE" id="PS00361">
    <property type="entry name" value="RIBOSOMAL_S10"/>
    <property type="match status" value="1"/>
</dbReference>
<sequence length="102" mass="11570">MNGQNIRIRLKAFDHRILDASTREIVSTAKRTGASVRGPVPLPTRIEKFTVNRSPHIDKKSREQFEMRTHKRLLDIVDPTPQTVDALMKLDLAAGVDVEIKL</sequence>
<evidence type="ECO:0000255" key="1">
    <source>
        <dbReference type="HAMAP-Rule" id="MF_00508"/>
    </source>
</evidence>
<evidence type="ECO:0000305" key="2"/>
<name>RS10_RHILW</name>
<reference key="1">
    <citation type="journal article" date="2010" name="Stand. Genomic Sci.">
        <title>Complete genome sequence of Rhizobium leguminosarum bv trifolii strain WSM2304, an effective microsymbiont of the South American clover Trifolium polymorphum.</title>
        <authorList>
            <person name="Reeve W."/>
            <person name="O'Hara G."/>
            <person name="Chain P."/>
            <person name="Ardley J."/>
            <person name="Brau L."/>
            <person name="Nandesena K."/>
            <person name="Tiwari R."/>
            <person name="Malfatti S."/>
            <person name="Kiss H."/>
            <person name="Lapidus A."/>
            <person name="Copeland A."/>
            <person name="Nolan M."/>
            <person name="Land M."/>
            <person name="Ivanova N."/>
            <person name="Mavromatis K."/>
            <person name="Markowitz V."/>
            <person name="Kyrpides N."/>
            <person name="Melino V."/>
            <person name="Denton M."/>
            <person name="Yates R."/>
            <person name="Howieson J."/>
        </authorList>
    </citation>
    <scope>NUCLEOTIDE SEQUENCE [LARGE SCALE GENOMIC DNA]</scope>
    <source>
        <strain>WSM2304</strain>
    </source>
</reference>
<accession>B5ZYT4</accession>